<keyword id="KW-0028">Amino-acid biosynthesis</keyword>
<keyword id="KW-0055">Arginine biosynthesis</keyword>
<keyword id="KW-0963">Cytoplasm</keyword>
<keyword id="KW-0456">Lyase</keyword>
<keyword id="KW-1185">Reference proteome</keyword>
<evidence type="ECO:0000255" key="1">
    <source>
        <dbReference type="HAMAP-Rule" id="MF_00006"/>
    </source>
</evidence>
<reference key="1">
    <citation type="journal article" date="2009" name="PLoS Genet.">
        <title>Organised genome dynamics in the Escherichia coli species results in highly diverse adaptive paths.</title>
        <authorList>
            <person name="Touchon M."/>
            <person name="Hoede C."/>
            <person name="Tenaillon O."/>
            <person name="Barbe V."/>
            <person name="Baeriswyl S."/>
            <person name="Bidet P."/>
            <person name="Bingen E."/>
            <person name="Bonacorsi S."/>
            <person name="Bouchier C."/>
            <person name="Bouvet O."/>
            <person name="Calteau A."/>
            <person name="Chiapello H."/>
            <person name="Clermont O."/>
            <person name="Cruveiller S."/>
            <person name="Danchin A."/>
            <person name="Diard M."/>
            <person name="Dossat C."/>
            <person name="Karoui M.E."/>
            <person name="Frapy E."/>
            <person name="Garry L."/>
            <person name="Ghigo J.M."/>
            <person name="Gilles A.M."/>
            <person name="Johnson J."/>
            <person name="Le Bouguenec C."/>
            <person name="Lescat M."/>
            <person name="Mangenot S."/>
            <person name="Martinez-Jehanne V."/>
            <person name="Matic I."/>
            <person name="Nassif X."/>
            <person name="Oztas S."/>
            <person name="Petit M.A."/>
            <person name="Pichon C."/>
            <person name="Rouy Z."/>
            <person name="Ruf C.S."/>
            <person name="Schneider D."/>
            <person name="Tourret J."/>
            <person name="Vacherie B."/>
            <person name="Vallenet D."/>
            <person name="Medigue C."/>
            <person name="Rocha E.P.C."/>
            <person name="Denamur E."/>
        </authorList>
    </citation>
    <scope>NUCLEOTIDE SEQUENCE [LARGE SCALE GENOMIC DNA]</scope>
    <source>
        <strain>55989 / EAEC</strain>
    </source>
</reference>
<gene>
    <name evidence="1" type="primary">argH</name>
    <name type="ordered locus">EC55989_4442</name>
</gene>
<dbReference type="EC" id="4.3.2.1" evidence="1"/>
<dbReference type="EMBL" id="CU928145">
    <property type="protein sequence ID" value="CAV01193.1"/>
    <property type="molecule type" value="Genomic_DNA"/>
</dbReference>
<dbReference type="RefSeq" id="WP_001230081.1">
    <property type="nucleotide sequence ID" value="NC_011748.1"/>
</dbReference>
<dbReference type="SMR" id="B7LA60"/>
<dbReference type="GeneID" id="75203210"/>
<dbReference type="KEGG" id="eck:EC55989_4442"/>
<dbReference type="HOGENOM" id="CLU_027272_2_3_6"/>
<dbReference type="UniPathway" id="UPA00068">
    <property type="reaction ID" value="UER00114"/>
</dbReference>
<dbReference type="Proteomes" id="UP000000746">
    <property type="component" value="Chromosome"/>
</dbReference>
<dbReference type="GO" id="GO:0005829">
    <property type="term" value="C:cytosol"/>
    <property type="evidence" value="ECO:0007669"/>
    <property type="project" value="TreeGrafter"/>
</dbReference>
<dbReference type="GO" id="GO:0004056">
    <property type="term" value="F:argininosuccinate lyase activity"/>
    <property type="evidence" value="ECO:0007669"/>
    <property type="project" value="UniProtKB-UniRule"/>
</dbReference>
<dbReference type="GO" id="GO:0042450">
    <property type="term" value="P:arginine biosynthetic process via ornithine"/>
    <property type="evidence" value="ECO:0007669"/>
    <property type="project" value="InterPro"/>
</dbReference>
<dbReference type="GO" id="GO:0006526">
    <property type="term" value="P:L-arginine biosynthetic process"/>
    <property type="evidence" value="ECO:0007669"/>
    <property type="project" value="UniProtKB-UniRule"/>
</dbReference>
<dbReference type="CDD" id="cd01359">
    <property type="entry name" value="Argininosuccinate_lyase"/>
    <property type="match status" value="1"/>
</dbReference>
<dbReference type="FunFam" id="1.10.275.10:FF:000004">
    <property type="entry name" value="Argininosuccinate lyase"/>
    <property type="match status" value="1"/>
</dbReference>
<dbReference type="FunFam" id="1.10.40.30:FF:000001">
    <property type="entry name" value="Argininosuccinate lyase"/>
    <property type="match status" value="1"/>
</dbReference>
<dbReference type="FunFam" id="1.20.200.10:FF:000006">
    <property type="entry name" value="Argininosuccinate lyase"/>
    <property type="match status" value="1"/>
</dbReference>
<dbReference type="Gene3D" id="1.10.40.30">
    <property type="entry name" value="Fumarase/aspartase (C-terminal domain)"/>
    <property type="match status" value="1"/>
</dbReference>
<dbReference type="Gene3D" id="1.20.200.10">
    <property type="entry name" value="Fumarase/aspartase (Central domain)"/>
    <property type="match status" value="1"/>
</dbReference>
<dbReference type="Gene3D" id="1.10.275.10">
    <property type="entry name" value="Fumarase/aspartase (N-terminal domain)"/>
    <property type="match status" value="1"/>
</dbReference>
<dbReference type="HAMAP" id="MF_00006">
    <property type="entry name" value="Arg_succ_lyase"/>
    <property type="match status" value="1"/>
</dbReference>
<dbReference type="InterPro" id="IPR029419">
    <property type="entry name" value="Arg_succ_lyase_C"/>
</dbReference>
<dbReference type="InterPro" id="IPR009049">
    <property type="entry name" value="Argininosuccinate_lyase"/>
</dbReference>
<dbReference type="InterPro" id="IPR024083">
    <property type="entry name" value="Fumarase/histidase_N"/>
</dbReference>
<dbReference type="InterPro" id="IPR020557">
    <property type="entry name" value="Fumarate_lyase_CS"/>
</dbReference>
<dbReference type="InterPro" id="IPR000362">
    <property type="entry name" value="Fumarate_lyase_fam"/>
</dbReference>
<dbReference type="InterPro" id="IPR022761">
    <property type="entry name" value="Fumarate_lyase_N"/>
</dbReference>
<dbReference type="InterPro" id="IPR008948">
    <property type="entry name" value="L-Aspartase-like"/>
</dbReference>
<dbReference type="NCBIfam" id="TIGR00838">
    <property type="entry name" value="argH"/>
    <property type="match status" value="1"/>
</dbReference>
<dbReference type="NCBIfam" id="NF008964">
    <property type="entry name" value="PRK12308.1"/>
    <property type="match status" value="1"/>
</dbReference>
<dbReference type="PANTHER" id="PTHR43814">
    <property type="entry name" value="ARGININOSUCCINATE LYASE"/>
    <property type="match status" value="1"/>
</dbReference>
<dbReference type="PANTHER" id="PTHR43814:SF1">
    <property type="entry name" value="ARGININOSUCCINATE LYASE"/>
    <property type="match status" value="1"/>
</dbReference>
<dbReference type="Pfam" id="PF14698">
    <property type="entry name" value="ASL_C2"/>
    <property type="match status" value="1"/>
</dbReference>
<dbReference type="Pfam" id="PF00206">
    <property type="entry name" value="Lyase_1"/>
    <property type="match status" value="1"/>
</dbReference>
<dbReference type="PRINTS" id="PR00145">
    <property type="entry name" value="ARGSUCLYASE"/>
</dbReference>
<dbReference type="PRINTS" id="PR00149">
    <property type="entry name" value="FUMRATELYASE"/>
</dbReference>
<dbReference type="SUPFAM" id="SSF48557">
    <property type="entry name" value="L-aspartase-like"/>
    <property type="match status" value="1"/>
</dbReference>
<dbReference type="PROSITE" id="PS00163">
    <property type="entry name" value="FUMARATE_LYASES"/>
    <property type="match status" value="1"/>
</dbReference>
<name>ARLY_ECO55</name>
<proteinExistence type="inferred from homology"/>
<accession>B7LA60</accession>
<organism>
    <name type="scientific">Escherichia coli (strain 55989 / EAEC)</name>
    <dbReference type="NCBI Taxonomy" id="585055"/>
    <lineage>
        <taxon>Bacteria</taxon>
        <taxon>Pseudomonadati</taxon>
        <taxon>Pseudomonadota</taxon>
        <taxon>Gammaproteobacteria</taxon>
        <taxon>Enterobacterales</taxon>
        <taxon>Enterobacteriaceae</taxon>
        <taxon>Escherichia</taxon>
    </lineage>
</organism>
<sequence length="457" mass="50387">MALWGGRFTQAADQRFKQFNDSLRFDYRLAEQDIVGSVAWSKALVTVGVLTAEEQAQLEEALNVLLEDVRARPQQILESDAEDIHSWVEGKLIDKVGQLGKKLHTGRSRNDQVATDLKLWCKDTVSELLTANRQLQSALVETAQNNQDAVMPGYTHLQRAQPVTFAHWCLAYVEMLARDESRLQDALKRLDVSPLGCGALAGTAYEIDREQLAGWLGFASATRNSLDSVSDRDHVLELLSAAAIGMVHLSRFAEDLIFFNTGEAGFVELSDRVTSGSSLMPQKKNPDALELIRGKCGRVQGALTGMMMTLKGLPLAYNKDMQEDKEGLFDALDTWLDCLHMAALVLDGIQVKRPRCQEAAQQGYANATELADYLVAKGVPFREAHHIVGEAVVEAIRQGKPLEDLPLDELQKFSPVIDEDVYPILSLQSCLDKRAAKGGVSPQQVAQAIAFAQARLE</sequence>
<comment type="catalytic activity">
    <reaction evidence="1">
        <text>2-(N(omega)-L-arginino)succinate = fumarate + L-arginine</text>
        <dbReference type="Rhea" id="RHEA:24020"/>
        <dbReference type="ChEBI" id="CHEBI:29806"/>
        <dbReference type="ChEBI" id="CHEBI:32682"/>
        <dbReference type="ChEBI" id="CHEBI:57472"/>
        <dbReference type="EC" id="4.3.2.1"/>
    </reaction>
</comment>
<comment type="pathway">
    <text evidence="1">Amino-acid biosynthesis; L-arginine biosynthesis; L-arginine from L-ornithine and carbamoyl phosphate: step 3/3.</text>
</comment>
<comment type="subcellular location">
    <subcellularLocation>
        <location evidence="1">Cytoplasm</location>
    </subcellularLocation>
</comment>
<comment type="similarity">
    <text evidence="1">Belongs to the lyase 1 family. Argininosuccinate lyase subfamily.</text>
</comment>
<protein>
    <recommendedName>
        <fullName evidence="1">Argininosuccinate lyase</fullName>
        <shortName evidence="1">ASAL</shortName>
        <ecNumber evidence="1">4.3.2.1</ecNumber>
    </recommendedName>
    <alternativeName>
        <fullName evidence="1">Arginosuccinase</fullName>
    </alternativeName>
</protein>
<feature type="chain" id="PRO_1000116322" description="Argininosuccinate lyase">
    <location>
        <begin position="1"/>
        <end position="457"/>
    </location>
</feature>